<keyword id="KW-0456">Lyase</keyword>
<keyword id="KW-0460">Magnesium</keyword>
<keyword id="KW-0464">Manganese</keyword>
<keyword id="KW-0479">Metal-binding</keyword>
<keyword id="KW-0686">Riboflavin biosynthesis</keyword>
<gene>
    <name evidence="1" type="primary">ribB</name>
    <name type="ordered locus">VC0395_0181</name>
    <name type="ordered locus">VC395_A1083</name>
</gene>
<evidence type="ECO:0000255" key="1">
    <source>
        <dbReference type="HAMAP-Rule" id="MF_00180"/>
    </source>
</evidence>
<comment type="function">
    <text evidence="1">Catalyzes the conversion of D-ribulose 5-phosphate to formate and 3,4-dihydroxy-2-butanone 4-phosphate.</text>
</comment>
<comment type="catalytic activity">
    <reaction evidence="1">
        <text>D-ribulose 5-phosphate = (2S)-2-hydroxy-3-oxobutyl phosphate + formate + H(+)</text>
        <dbReference type="Rhea" id="RHEA:18457"/>
        <dbReference type="ChEBI" id="CHEBI:15378"/>
        <dbReference type="ChEBI" id="CHEBI:15740"/>
        <dbReference type="ChEBI" id="CHEBI:58121"/>
        <dbReference type="ChEBI" id="CHEBI:58830"/>
        <dbReference type="EC" id="4.1.99.12"/>
    </reaction>
</comment>
<comment type="cofactor">
    <cofactor evidence="1">
        <name>Mg(2+)</name>
        <dbReference type="ChEBI" id="CHEBI:18420"/>
    </cofactor>
    <cofactor evidence="1">
        <name>Mn(2+)</name>
        <dbReference type="ChEBI" id="CHEBI:29035"/>
    </cofactor>
    <text evidence="1">Binds 2 divalent metal cations per subunit. Magnesium or manganese.</text>
</comment>
<comment type="pathway">
    <text evidence="1">Cofactor biosynthesis; riboflavin biosynthesis; 2-hydroxy-3-oxobutyl phosphate from D-ribulose 5-phosphate: step 1/1.</text>
</comment>
<comment type="subunit">
    <text evidence="1">Homodimer.</text>
</comment>
<comment type="similarity">
    <text evidence="1">Belongs to the DHBP synthase family.</text>
</comment>
<feature type="chain" id="PRO_1000071651" description="3,4-dihydroxy-2-butanone 4-phosphate synthase">
    <location>
        <begin position="1"/>
        <end position="218"/>
    </location>
</feature>
<feature type="binding site" evidence="1">
    <location>
        <begin position="38"/>
        <end position="39"/>
    </location>
    <ligand>
        <name>D-ribulose 5-phosphate</name>
        <dbReference type="ChEBI" id="CHEBI:58121"/>
    </ligand>
</feature>
<feature type="binding site" evidence="1">
    <location>
        <position position="39"/>
    </location>
    <ligand>
        <name>Mg(2+)</name>
        <dbReference type="ChEBI" id="CHEBI:18420"/>
        <label>1</label>
    </ligand>
</feature>
<feature type="binding site" evidence="1">
    <location>
        <position position="39"/>
    </location>
    <ligand>
        <name>Mg(2+)</name>
        <dbReference type="ChEBI" id="CHEBI:18420"/>
        <label>2</label>
    </ligand>
</feature>
<feature type="binding site" evidence="1">
    <location>
        <position position="43"/>
    </location>
    <ligand>
        <name>D-ribulose 5-phosphate</name>
        <dbReference type="ChEBI" id="CHEBI:58121"/>
    </ligand>
</feature>
<feature type="binding site" evidence="1">
    <location>
        <begin position="151"/>
        <end position="155"/>
    </location>
    <ligand>
        <name>D-ribulose 5-phosphate</name>
        <dbReference type="ChEBI" id="CHEBI:58121"/>
    </ligand>
</feature>
<feature type="binding site" evidence="1">
    <location>
        <position position="154"/>
    </location>
    <ligand>
        <name>Mg(2+)</name>
        <dbReference type="ChEBI" id="CHEBI:18420"/>
        <label>2</label>
    </ligand>
</feature>
<feature type="binding site" evidence="1">
    <location>
        <position position="175"/>
    </location>
    <ligand>
        <name>D-ribulose 5-phosphate</name>
        <dbReference type="ChEBI" id="CHEBI:58121"/>
    </ligand>
</feature>
<feature type="site" description="Essential for catalytic activity" evidence="1">
    <location>
        <position position="137"/>
    </location>
</feature>
<feature type="site" description="Essential for catalytic activity" evidence="1">
    <location>
        <position position="175"/>
    </location>
</feature>
<protein>
    <recommendedName>
        <fullName evidence="1">3,4-dihydroxy-2-butanone 4-phosphate synthase</fullName>
        <shortName evidence="1">DHBP synthase</shortName>
        <ecNumber evidence="1">4.1.99.12</ecNumber>
    </recommendedName>
</protein>
<dbReference type="EC" id="4.1.99.12" evidence="1"/>
<dbReference type="EMBL" id="CP000626">
    <property type="protein sequence ID" value="ABQ18628.1"/>
    <property type="molecule type" value="Genomic_DNA"/>
</dbReference>
<dbReference type="EMBL" id="CP001236">
    <property type="protein sequence ID" value="ACP11913.1"/>
    <property type="molecule type" value="Genomic_DNA"/>
</dbReference>
<dbReference type="RefSeq" id="WP_001076652.1">
    <property type="nucleotide sequence ID" value="NZ_JAACZH010000003.1"/>
</dbReference>
<dbReference type="SMR" id="A5F159"/>
<dbReference type="KEGG" id="vco:VC0395_0181"/>
<dbReference type="KEGG" id="vcr:VC395_A1083"/>
<dbReference type="PATRIC" id="fig|345073.21.peg.3806"/>
<dbReference type="eggNOG" id="COG0108">
    <property type="taxonomic scope" value="Bacteria"/>
</dbReference>
<dbReference type="HOGENOM" id="CLU_020273_3_0_6"/>
<dbReference type="OrthoDB" id="9793111at2"/>
<dbReference type="UniPathway" id="UPA00275">
    <property type="reaction ID" value="UER00399"/>
</dbReference>
<dbReference type="Proteomes" id="UP000000249">
    <property type="component" value="Chromosome 1"/>
</dbReference>
<dbReference type="GO" id="GO:0005829">
    <property type="term" value="C:cytosol"/>
    <property type="evidence" value="ECO:0007669"/>
    <property type="project" value="TreeGrafter"/>
</dbReference>
<dbReference type="GO" id="GO:0008686">
    <property type="term" value="F:3,4-dihydroxy-2-butanone-4-phosphate synthase activity"/>
    <property type="evidence" value="ECO:0007669"/>
    <property type="project" value="UniProtKB-UniRule"/>
</dbReference>
<dbReference type="GO" id="GO:0000287">
    <property type="term" value="F:magnesium ion binding"/>
    <property type="evidence" value="ECO:0007669"/>
    <property type="project" value="UniProtKB-UniRule"/>
</dbReference>
<dbReference type="GO" id="GO:0030145">
    <property type="term" value="F:manganese ion binding"/>
    <property type="evidence" value="ECO:0007669"/>
    <property type="project" value="UniProtKB-UniRule"/>
</dbReference>
<dbReference type="GO" id="GO:0009231">
    <property type="term" value="P:riboflavin biosynthetic process"/>
    <property type="evidence" value="ECO:0007669"/>
    <property type="project" value="UniProtKB-UniRule"/>
</dbReference>
<dbReference type="FunFam" id="3.90.870.10:FF:000002">
    <property type="entry name" value="3,4-dihydroxy-2-butanone 4-phosphate synthase"/>
    <property type="match status" value="1"/>
</dbReference>
<dbReference type="Gene3D" id="3.90.870.10">
    <property type="entry name" value="DHBP synthase"/>
    <property type="match status" value="1"/>
</dbReference>
<dbReference type="HAMAP" id="MF_00180">
    <property type="entry name" value="RibB"/>
    <property type="match status" value="1"/>
</dbReference>
<dbReference type="InterPro" id="IPR017945">
    <property type="entry name" value="DHBP_synth_RibB-like_a/b_dom"/>
</dbReference>
<dbReference type="InterPro" id="IPR000422">
    <property type="entry name" value="DHBP_synthase_RibB"/>
</dbReference>
<dbReference type="NCBIfam" id="TIGR00506">
    <property type="entry name" value="ribB"/>
    <property type="match status" value="1"/>
</dbReference>
<dbReference type="PANTHER" id="PTHR21327:SF38">
    <property type="entry name" value="3,4-DIHYDROXY-2-BUTANONE 4-PHOSPHATE SYNTHASE"/>
    <property type="match status" value="1"/>
</dbReference>
<dbReference type="PANTHER" id="PTHR21327">
    <property type="entry name" value="GTP CYCLOHYDROLASE II-RELATED"/>
    <property type="match status" value="1"/>
</dbReference>
<dbReference type="Pfam" id="PF00926">
    <property type="entry name" value="DHBP_synthase"/>
    <property type="match status" value="1"/>
</dbReference>
<dbReference type="SUPFAM" id="SSF55821">
    <property type="entry name" value="YrdC/RibB"/>
    <property type="match status" value="1"/>
</dbReference>
<name>RIBB_VIBC3</name>
<proteinExistence type="inferred from homology"/>
<sequence>MNQSSLLAEFGDPITRVENALQALREGRGVLLLDDEDRENEGDIIYAVESLTTVQMALMIRECSGIVCLCLTEAQADRLALPLMVVNNNSANQTAFTVSIEAKHGVTTGVSAQDRVTTIKTAANPQAKPEDLARPGHVFPLRARAGGVLARRGHTEGTVDLMQMAGLQPAGVLCELTNPDGSMAKTPEIIAFGKLHNMPVLTIEDMVQYRIQFDLKLA</sequence>
<organism>
    <name type="scientific">Vibrio cholerae serotype O1 (strain ATCC 39541 / Classical Ogawa 395 / O395)</name>
    <dbReference type="NCBI Taxonomy" id="345073"/>
    <lineage>
        <taxon>Bacteria</taxon>
        <taxon>Pseudomonadati</taxon>
        <taxon>Pseudomonadota</taxon>
        <taxon>Gammaproteobacteria</taxon>
        <taxon>Vibrionales</taxon>
        <taxon>Vibrionaceae</taxon>
        <taxon>Vibrio</taxon>
    </lineage>
</organism>
<accession>A5F159</accession>
<accession>C3M700</accession>
<reference key="1">
    <citation type="submission" date="2007-03" db="EMBL/GenBank/DDBJ databases">
        <authorList>
            <person name="Heidelberg J."/>
        </authorList>
    </citation>
    <scope>NUCLEOTIDE SEQUENCE [LARGE SCALE GENOMIC DNA]</scope>
    <source>
        <strain>ATCC 39541 / Classical Ogawa 395 / O395</strain>
    </source>
</reference>
<reference key="2">
    <citation type="journal article" date="2008" name="PLoS ONE">
        <title>A recalibrated molecular clock and independent origins for the cholera pandemic clones.</title>
        <authorList>
            <person name="Feng L."/>
            <person name="Reeves P.R."/>
            <person name="Lan R."/>
            <person name="Ren Y."/>
            <person name="Gao C."/>
            <person name="Zhou Z."/>
            <person name="Ren Y."/>
            <person name="Cheng J."/>
            <person name="Wang W."/>
            <person name="Wang J."/>
            <person name="Qian W."/>
            <person name="Li D."/>
            <person name="Wang L."/>
        </authorList>
    </citation>
    <scope>NUCLEOTIDE SEQUENCE [LARGE SCALE GENOMIC DNA]</scope>
    <source>
        <strain>ATCC 39541 / Classical Ogawa 395 / O395</strain>
    </source>
</reference>